<dbReference type="EC" id="1.14.15.30" evidence="5"/>
<dbReference type="EMBL" id="HQ425875">
    <property type="protein sequence ID" value="ADY18318.1"/>
    <property type="molecule type" value="Genomic_DNA"/>
</dbReference>
<dbReference type="RefSeq" id="WP_059382556.1">
    <property type="nucleotide sequence ID" value="NZ_CP032221.1"/>
</dbReference>
<dbReference type="SMR" id="F1CMX8"/>
<dbReference type="STRING" id="1829.GCA_000716895_01734"/>
<dbReference type="BRENDA" id="1.14.15.30">
    <property type="organism ID" value="5395"/>
</dbReference>
<dbReference type="GO" id="GO:0051537">
    <property type="term" value="F:2 iron, 2 sulfur cluster binding"/>
    <property type="evidence" value="ECO:0007669"/>
    <property type="project" value="UniProtKB-KW"/>
</dbReference>
<dbReference type="GO" id="GO:0036200">
    <property type="term" value="F:3-ketosteroid 9-alpha-monooxygenase activity"/>
    <property type="evidence" value="ECO:0007669"/>
    <property type="project" value="UniProtKB-EC"/>
</dbReference>
<dbReference type="GO" id="GO:0005506">
    <property type="term" value="F:iron ion binding"/>
    <property type="evidence" value="ECO:0000250"/>
    <property type="project" value="UniProtKB"/>
</dbReference>
<dbReference type="GO" id="GO:0008203">
    <property type="term" value="P:cholesterol metabolic process"/>
    <property type="evidence" value="ECO:0007669"/>
    <property type="project" value="InterPro"/>
</dbReference>
<dbReference type="GO" id="GO:0016042">
    <property type="term" value="P:lipid catabolic process"/>
    <property type="evidence" value="ECO:0007669"/>
    <property type="project" value="UniProtKB-KW"/>
</dbReference>
<dbReference type="CDD" id="cd03531">
    <property type="entry name" value="Rieske_RO_Alpha_KSH"/>
    <property type="match status" value="1"/>
</dbReference>
<dbReference type="FunFam" id="2.102.10.10:FF:000012">
    <property type="entry name" value="3-ketosteroid-9-alpha-hydroxylase oxygenase subunit"/>
    <property type="match status" value="1"/>
</dbReference>
<dbReference type="FunFam" id="3.90.380.10:FF:000004">
    <property type="entry name" value="3-ketosteroid-9-alpha-hydroxylase oxygenase subunit"/>
    <property type="match status" value="1"/>
</dbReference>
<dbReference type="Gene3D" id="3.90.380.10">
    <property type="entry name" value="Naphthalene 1,2-dioxygenase Alpha Subunit, Chain A, domain 1"/>
    <property type="match status" value="1"/>
</dbReference>
<dbReference type="Gene3D" id="2.102.10.10">
    <property type="entry name" value="Rieske [2Fe-2S] iron-sulphur domain"/>
    <property type="match status" value="1"/>
</dbReference>
<dbReference type="InterPro" id="IPR050584">
    <property type="entry name" value="Cholesterol_7-desaturase"/>
</dbReference>
<dbReference type="InterPro" id="IPR045605">
    <property type="entry name" value="KshA-like_C"/>
</dbReference>
<dbReference type="InterPro" id="IPR017941">
    <property type="entry name" value="Rieske_2Fe-2S"/>
</dbReference>
<dbReference type="InterPro" id="IPR036922">
    <property type="entry name" value="Rieske_2Fe-2S_sf"/>
</dbReference>
<dbReference type="PANTHER" id="PTHR21266:SF60">
    <property type="entry name" value="3-KETOSTEROID-9-ALPHA-MONOOXYGENASE, OXYGENASE COMPONENT"/>
    <property type="match status" value="1"/>
</dbReference>
<dbReference type="PANTHER" id="PTHR21266">
    <property type="entry name" value="IRON-SULFUR DOMAIN CONTAINING PROTEIN"/>
    <property type="match status" value="1"/>
</dbReference>
<dbReference type="Pfam" id="PF19298">
    <property type="entry name" value="KshA_C"/>
    <property type="match status" value="1"/>
</dbReference>
<dbReference type="Pfam" id="PF00355">
    <property type="entry name" value="Rieske"/>
    <property type="match status" value="1"/>
</dbReference>
<dbReference type="SUPFAM" id="SSF55961">
    <property type="entry name" value="Bet v1-like"/>
    <property type="match status" value="1"/>
</dbReference>
<dbReference type="SUPFAM" id="SSF50022">
    <property type="entry name" value="ISP domain"/>
    <property type="match status" value="1"/>
</dbReference>
<dbReference type="PROSITE" id="PS51296">
    <property type="entry name" value="RIESKE"/>
    <property type="match status" value="1"/>
</dbReference>
<proteinExistence type="evidence at protein level"/>
<accession>F1CMX8</accession>
<gene>
    <name evidence="4" type="primary">kshA</name>
    <name evidence="4" type="synonym">kshA3</name>
</gene>
<comment type="function">
    <text evidence="3">In vitro, catalyzes the introduction of a 9alpha-hydroxyl moiety into the ring B of 3-ketosteroid substrates such as 1,4-androstadiene-3,17-dione (ADD), 4-androstene-3,17-dione (AD), 4-androstene-17beta-ol-3-one (testosterone), 4-pregnene-3,20-dione (progesterone), 23,24-bisnorcholesta-4-ene-22-oate and 23,24-bisnorcholesta-1,4-diene-22-oate.</text>
</comment>
<comment type="catalytic activity">
    <reaction evidence="5">
        <text>androsta-1,4-diene-3,17-dione + 2 reduced [2Fe-2S]-[ferredoxin] + O2 + 2 H(+) = 9alpha-hydroxyandrosta-1,4-diene-3,17-dione + 2 oxidized [2Fe-2S]-[ferredoxin] + H2O</text>
        <dbReference type="Rhea" id="RHEA:32199"/>
        <dbReference type="Rhea" id="RHEA-COMP:10000"/>
        <dbReference type="Rhea" id="RHEA-COMP:10001"/>
        <dbReference type="ChEBI" id="CHEBI:15377"/>
        <dbReference type="ChEBI" id="CHEBI:15378"/>
        <dbReference type="ChEBI" id="CHEBI:15379"/>
        <dbReference type="ChEBI" id="CHEBI:33737"/>
        <dbReference type="ChEBI" id="CHEBI:33738"/>
        <dbReference type="ChEBI" id="CHEBI:40799"/>
        <dbReference type="ChEBI" id="CHEBI:63641"/>
        <dbReference type="EC" id="1.14.15.30"/>
    </reaction>
</comment>
<comment type="cofactor">
    <cofactor evidence="2">
        <name>[2Fe-2S] cluster</name>
        <dbReference type="ChEBI" id="CHEBI:190135"/>
    </cofactor>
    <text evidence="2">Binds 1 [2Fe-2S] cluster per subunit.</text>
</comment>
<comment type="cofactor">
    <cofactor evidence="1">
        <name>Fe cation</name>
        <dbReference type="ChEBI" id="CHEBI:24875"/>
    </cofactor>
    <text evidence="1">Binds 1 Fe cation.</text>
</comment>
<comment type="subunit">
    <text evidence="1">Homotrimer. The two-component system 3-ketosteroid-9-alpha-monooxygenase is composed of an oxygenase component KshA and a reductase component KshB.</text>
</comment>
<comment type="induction">
    <text evidence="3">By 4-androstene-3,17-dione (AD).</text>
</comment>
<name>KSHA3_RHORH</name>
<evidence type="ECO:0000250" key="1">
    <source>
        <dbReference type="UniProtKB" id="F1CMY8"/>
    </source>
</evidence>
<evidence type="ECO:0000255" key="2">
    <source>
        <dbReference type="PROSITE-ProRule" id="PRU00628"/>
    </source>
</evidence>
<evidence type="ECO:0000269" key="3">
    <source>
    </source>
</evidence>
<evidence type="ECO:0000303" key="4">
    <source>
    </source>
</evidence>
<evidence type="ECO:0000305" key="5">
    <source>
    </source>
</evidence>
<sequence length="382" mass="43954">MAQIREIDVGEVRTRFARGWHCLGLSRTFKDGKPHAVEAFGTKLVVWADSNGEPKVLDAYCRHMGGDLSQGEIKGDSVACPFHDWRWGGNGKCTDIPYARRVPPLARTRSWITMEKHGQLFVWNDPEGNTPPPEVTIPEIEQYGSDEWTDWTWNQIRIEGSNCREIIDNVVDMAHFFYIHYAFPTFFKNVFEGHIAEQYLNTRGRPDKGMATQYGLESTLESYAAYYGPSYMINPLKNNYGGYQTESVLINCHYPITHDSFMLQYGIIVKKPQGMSPEQSDVLAAKLTEGVGEGFLQDVEIWKNKTKIENPLLCEEDGPVYQLRRWYEQFYVDVADVTEKMTGRFEFEVDTAKANEAWEKEVAENLERKKREEEQGKQEAEV</sequence>
<reference key="1">
    <citation type="journal article" date="2011" name="J. Bacteriol.">
        <title>Multiplicity of 3-ketosteroid-9alpha-hydroxylase enzymes in Rhodococcus rhodochrous DSM43269 for specific degradation of different classes of steroids.</title>
        <authorList>
            <person name="Petrusma M."/>
            <person name="Hessels G."/>
            <person name="Dijkhuizen L."/>
            <person name="van der Geize R."/>
        </authorList>
    </citation>
    <scope>NUCLEOTIDE SEQUENCE [GENOMIC DNA]</scope>
    <scope>FUNCTION</scope>
    <scope>CATALYTIC ACTIVITY</scope>
    <scope>INDUCTION</scope>
    <scope>SUBSTRATE SPECIFICITY</scope>
    <source>
        <strain>DSM 43269</strain>
    </source>
</reference>
<feature type="chain" id="PRO_0000438401" description="3-ketosteroid-9-alpha-monooxygenase, oxygenase component">
    <location>
        <begin position="1"/>
        <end position="382"/>
    </location>
</feature>
<feature type="domain" description="Rieske" evidence="2">
    <location>
        <begin position="20"/>
        <end position="122"/>
    </location>
</feature>
<feature type="binding site" evidence="2">
    <location>
        <position position="61"/>
    </location>
    <ligand>
        <name>[2Fe-2S] cluster</name>
        <dbReference type="ChEBI" id="CHEBI:190135"/>
    </ligand>
</feature>
<feature type="binding site" evidence="2">
    <location>
        <position position="63"/>
    </location>
    <ligand>
        <name>[2Fe-2S] cluster</name>
        <dbReference type="ChEBI" id="CHEBI:190135"/>
    </ligand>
</feature>
<feature type="binding site" evidence="2">
    <location>
        <position position="80"/>
    </location>
    <ligand>
        <name>[2Fe-2S] cluster</name>
        <dbReference type="ChEBI" id="CHEBI:190135"/>
    </ligand>
</feature>
<feature type="binding site" evidence="2">
    <location>
        <position position="83"/>
    </location>
    <ligand>
        <name>[2Fe-2S] cluster</name>
        <dbReference type="ChEBI" id="CHEBI:190135"/>
    </ligand>
</feature>
<feature type="binding site" evidence="1">
    <location>
        <position position="169"/>
    </location>
    <ligand>
        <name>Fe cation</name>
        <dbReference type="ChEBI" id="CHEBI:24875"/>
    </ligand>
</feature>
<feature type="binding site" evidence="1">
    <location>
        <position position="175"/>
    </location>
    <ligand>
        <name>Fe cation</name>
        <dbReference type="ChEBI" id="CHEBI:24875"/>
    </ligand>
</feature>
<feature type="binding site" evidence="1">
    <location>
        <position position="180"/>
    </location>
    <ligand>
        <name>Fe cation</name>
        <dbReference type="ChEBI" id="CHEBI:24875"/>
    </ligand>
</feature>
<feature type="binding site" evidence="1">
    <location>
        <position position="298"/>
    </location>
    <ligand>
        <name>Fe cation</name>
        <dbReference type="ChEBI" id="CHEBI:24875"/>
    </ligand>
</feature>
<organism>
    <name type="scientific">Rhodococcus rhodochrous</name>
    <dbReference type="NCBI Taxonomy" id="1829"/>
    <lineage>
        <taxon>Bacteria</taxon>
        <taxon>Bacillati</taxon>
        <taxon>Actinomycetota</taxon>
        <taxon>Actinomycetes</taxon>
        <taxon>Mycobacteriales</taxon>
        <taxon>Nocardiaceae</taxon>
        <taxon>Rhodococcus</taxon>
    </lineage>
</organism>
<protein>
    <recommendedName>
        <fullName evidence="4">3-ketosteroid-9-alpha-monooxygenase, oxygenase component</fullName>
    </recommendedName>
    <alternativeName>
        <fullName evidence="4">3-ketosteroid-9-alpha-hydroxylase, oxygenase component</fullName>
        <shortName evidence="4">KSH</shortName>
    </alternativeName>
    <alternativeName>
        <fullName evidence="4">Androsta-1,4-diene-3,17-dione 9-alpha-hydroxylase</fullName>
        <ecNumber evidence="5">1.14.15.30</ecNumber>
    </alternativeName>
    <alternativeName>
        <fullName evidence="5">Rieske-type oxygenase</fullName>
        <shortName evidence="5">RO</shortName>
    </alternativeName>
</protein>
<keyword id="KW-0001">2Fe-2S</keyword>
<keyword id="KW-0408">Iron</keyword>
<keyword id="KW-0411">Iron-sulfur</keyword>
<keyword id="KW-0442">Lipid degradation</keyword>
<keyword id="KW-0443">Lipid metabolism</keyword>
<keyword id="KW-0479">Metal-binding</keyword>
<keyword id="KW-0560">Oxidoreductase</keyword>
<keyword id="KW-0753">Steroid metabolism</keyword>